<evidence type="ECO:0000250" key="1">
    <source>
        <dbReference type="UniProtKB" id="P36164"/>
    </source>
</evidence>
<evidence type="ECO:0000255" key="2"/>
<evidence type="ECO:0000305" key="3"/>
<organism>
    <name type="scientific">Vanderwaltozyma polyspora (strain ATCC 22028 / DSM 70294 / BCRC 21397 / CBS 2163 / NBRC 10782 / NRRL Y-8283 / UCD 57-17)</name>
    <name type="common">Kluyveromyces polysporus</name>
    <dbReference type="NCBI Taxonomy" id="436907"/>
    <lineage>
        <taxon>Eukaryota</taxon>
        <taxon>Fungi</taxon>
        <taxon>Dikarya</taxon>
        <taxon>Ascomycota</taxon>
        <taxon>Saccharomycotina</taxon>
        <taxon>Saccharomycetes</taxon>
        <taxon>Saccharomycetales</taxon>
        <taxon>Saccharomycetaceae</taxon>
        <taxon>Vanderwaltozyma</taxon>
    </lineage>
</organism>
<accession>A7TMU9</accession>
<name>TVP38_VANPO</name>
<protein>
    <recommendedName>
        <fullName>Golgi apparatus membrane protein TVP38</fullName>
    </recommendedName>
</protein>
<sequence>MADNYEARTSSHYDNNATEFDDYFNEFDTGIGLGPDDEDDFLDIYNLSPRQRVVYQFRRTVNQFLSQYYALEPWQRILLAIGGGLIGILALLMLIFHNKILHKLVEMSNDLKEKWSTPIVLVTLIFFVAFPPMIGFSLLSTTTGLIYGISFKGWVILAIGAVTGSICSFALFKTILHSRAEKLIQMNRRFAAFASILQENNSYWILALLRLCPFPYSLTNGAVGAVYGVSIKNFAIGNIITTPKLLIYLFIGSRIKNMGETESSASKIFDLVSILLTVLALGLTAWVLYFKTQKRYQQLQDQSTINTSNDLDIDQNFEI</sequence>
<feature type="chain" id="PRO_0000343076" description="Golgi apparatus membrane protein TVP38">
    <location>
        <begin position="1"/>
        <end position="319"/>
    </location>
</feature>
<feature type="topological domain" description="Lumenal" evidence="2">
    <location>
        <begin position="1"/>
        <end position="76"/>
    </location>
</feature>
<feature type="transmembrane region" description="Helical" evidence="2">
    <location>
        <begin position="77"/>
        <end position="97"/>
    </location>
</feature>
<feature type="topological domain" description="Cytoplasmic" evidence="2">
    <location>
        <begin position="98"/>
        <end position="118"/>
    </location>
</feature>
<feature type="transmembrane region" description="Helical" evidence="2">
    <location>
        <begin position="119"/>
        <end position="139"/>
    </location>
</feature>
<feature type="topological domain" description="Lumenal" evidence="2">
    <location>
        <begin position="140"/>
        <end position="143"/>
    </location>
</feature>
<feature type="transmembrane region" description="Helical" evidence="2">
    <location>
        <begin position="144"/>
        <end position="164"/>
    </location>
</feature>
<feature type="topological domain" description="Cytoplasmic" evidence="2">
    <location>
        <begin position="165"/>
        <end position="232"/>
    </location>
</feature>
<feature type="transmembrane region" description="Helical" evidence="2">
    <location>
        <begin position="233"/>
        <end position="253"/>
    </location>
</feature>
<feature type="topological domain" description="Lumenal" evidence="2">
    <location>
        <begin position="254"/>
        <end position="267"/>
    </location>
</feature>
<feature type="transmembrane region" description="Helical" evidence="2">
    <location>
        <begin position="268"/>
        <end position="288"/>
    </location>
</feature>
<feature type="topological domain" description="Cytoplasmic" evidence="2">
    <location>
        <begin position="289"/>
        <end position="319"/>
    </location>
</feature>
<feature type="region of interest" description="VTT domain" evidence="1">
    <location>
        <begin position="144"/>
        <end position="255"/>
    </location>
</feature>
<feature type="glycosylation site" description="N-linked (GlcNAc...) asparagine" evidence="2">
    <location>
        <position position="16"/>
    </location>
</feature>
<reference key="1">
    <citation type="journal article" date="2007" name="Proc. Natl. Acad. Sci. U.S.A.">
        <title>Independent sorting-out of thousands of duplicated gene pairs in two yeast species descended from a whole-genome duplication.</title>
        <authorList>
            <person name="Scannell D.R."/>
            <person name="Frank A.C."/>
            <person name="Conant G.C."/>
            <person name="Byrne K.P."/>
            <person name="Woolfit M."/>
            <person name="Wolfe K.H."/>
        </authorList>
    </citation>
    <scope>NUCLEOTIDE SEQUENCE [LARGE SCALE GENOMIC DNA]</scope>
    <source>
        <strain>ATCC 22028 / DSM 70294 / BCRC 21397 / CBS 2163 / NBRC 10782 / NRRL Y-8283 / UCD 57-17</strain>
    </source>
</reference>
<gene>
    <name type="primary">TVP38</name>
    <name type="ORF">Kpol_1030p31</name>
</gene>
<dbReference type="EMBL" id="DS480425">
    <property type="protein sequence ID" value="EDO16421.1"/>
    <property type="molecule type" value="Genomic_DNA"/>
</dbReference>
<dbReference type="RefSeq" id="XP_001644279.1">
    <property type="nucleotide sequence ID" value="XM_001644229.1"/>
</dbReference>
<dbReference type="FunCoup" id="A7TMU9">
    <property type="interactions" value="121"/>
</dbReference>
<dbReference type="STRING" id="436907.A7TMU9"/>
<dbReference type="GlyCosmos" id="A7TMU9">
    <property type="glycosylation" value="1 site, No reported glycans"/>
</dbReference>
<dbReference type="GeneID" id="5544554"/>
<dbReference type="KEGG" id="vpo:Kpol_1030p31"/>
<dbReference type="eggNOG" id="KOG3140">
    <property type="taxonomic scope" value="Eukaryota"/>
</dbReference>
<dbReference type="HOGENOM" id="CLU_041954_1_1_1"/>
<dbReference type="InParanoid" id="A7TMU9"/>
<dbReference type="OMA" id="KWQALET"/>
<dbReference type="OrthoDB" id="166803at2759"/>
<dbReference type="PhylomeDB" id="A7TMU9"/>
<dbReference type="Proteomes" id="UP000000267">
    <property type="component" value="Unassembled WGS sequence"/>
</dbReference>
<dbReference type="GO" id="GO:0000139">
    <property type="term" value="C:Golgi membrane"/>
    <property type="evidence" value="ECO:0007669"/>
    <property type="project" value="UniProtKB-SubCell"/>
</dbReference>
<dbReference type="GO" id="GO:0000022">
    <property type="term" value="P:mitotic spindle elongation"/>
    <property type="evidence" value="ECO:0007669"/>
    <property type="project" value="EnsemblFungi"/>
</dbReference>
<dbReference type="GO" id="GO:0016192">
    <property type="term" value="P:vesicle-mediated transport"/>
    <property type="evidence" value="ECO:0007669"/>
    <property type="project" value="EnsemblFungi"/>
</dbReference>
<dbReference type="InterPro" id="IPR051076">
    <property type="entry name" value="Golgi_membrane_TVP38/TMEM64"/>
</dbReference>
<dbReference type="InterPro" id="IPR032816">
    <property type="entry name" value="VTT_dom"/>
</dbReference>
<dbReference type="PANTHER" id="PTHR47549:SF1">
    <property type="entry name" value="GOLGI APPARATUS MEMBRANE PROTEIN TVP38"/>
    <property type="match status" value="1"/>
</dbReference>
<dbReference type="PANTHER" id="PTHR47549">
    <property type="entry name" value="GOLGI APPARATUS MEMBRANE PROTEIN TVP38-RELATED"/>
    <property type="match status" value="1"/>
</dbReference>
<dbReference type="Pfam" id="PF09335">
    <property type="entry name" value="VTT_dom"/>
    <property type="match status" value="1"/>
</dbReference>
<keyword id="KW-0325">Glycoprotein</keyword>
<keyword id="KW-0333">Golgi apparatus</keyword>
<keyword id="KW-0472">Membrane</keyword>
<keyword id="KW-1185">Reference proteome</keyword>
<keyword id="KW-0812">Transmembrane</keyword>
<keyword id="KW-1133">Transmembrane helix</keyword>
<comment type="function">
    <text>Golgi membrane protein involved in vesicular trafficking and spindle migration.</text>
</comment>
<comment type="subcellular location">
    <subcellularLocation>
        <location>Golgi apparatus membrane</location>
        <topology>Multi-pass membrane protein</topology>
    </subcellularLocation>
</comment>
<comment type="domain">
    <text evidence="1">The VTT domain was previously called the SNARE-assoc domain. As there is no evidence that this domain associates with SNARE proteins, it was renamed as VMP1, TMEM41, and TVP38 (VTT) domain.</text>
</comment>
<comment type="similarity">
    <text evidence="3">Belongs to the TVP38/TMEM64 family.</text>
</comment>
<proteinExistence type="inferred from homology"/>